<dbReference type="EC" id="4.1.1.37" evidence="1"/>
<dbReference type="EMBL" id="BX640435">
    <property type="protein sequence ID" value="CAE39411.1"/>
    <property type="molecule type" value="Genomic_DNA"/>
</dbReference>
<dbReference type="RefSeq" id="WP_010929405.1">
    <property type="nucleotide sequence ID" value="NC_002928.3"/>
</dbReference>
<dbReference type="SMR" id="Q7W3B3"/>
<dbReference type="GeneID" id="93205928"/>
<dbReference type="KEGG" id="bpa:BPP4132"/>
<dbReference type="HOGENOM" id="CLU_040933_0_0_4"/>
<dbReference type="UniPathway" id="UPA00251">
    <property type="reaction ID" value="UER00321"/>
</dbReference>
<dbReference type="Proteomes" id="UP000001421">
    <property type="component" value="Chromosome"/>
</dbReference>
<dbReference type="GO" id="GO:0005829">
    <property type="term" value="C:cytosol"/>
    <property type="evidence" value="ECO:0007669"/>
    <property type="project" value="TreeGrafter"/>
</dbReference>
<dbReference type="GO" id="GO:0004853">
    <property type="term" value="F:uroporphyrinogen decarboxylase activity"/>
    <property type="evidence" value="ECO:0007669"/>
    <property type="project" value="UniProtKB-UniRule"/>
</dbReference>
<dbReference type="GO" id="GO:0019353">
    <property type="term" value="P:protoporphyrinogen IX biosynthetic process from glutamate"/>
    <property type="evidence" value="ECO:0007669"/>
    <property type="project" value="TreeGrafter"/>
</dbReference>
<dbReference type="CDD" id="cd00717">
    <property type="entry name" value="URO-D"/>
    <property type="match status" value="1"/>
</dbReference>
<dbReference type="FunFam" id="3.20.20.210:FF:000001">
    <property type="entry name" value="Uroporphyrinogen decarboxylase"/>
    <property type="match status" value="1"/>
</dbReference>
<dbReference type="Gene3D" id="3.20.20.210">
    <property type="match status" value="1"/>
</dbReference>
<dbReference type="HAMAP" id="MF_00218">
    <property type="entry name" value="URO_D"/>
    <property type="match status" value="1"/>
</dbReference>
<dbReference type="InterPro" id="IPR038071">
    <property type="entry name" value="UROD/MetE-like_sf"/>
</dbReference>
<dbReference type="InterPro" id="IPR006361">
    <property type="entry name" value="Uroporphyrinogen_deCO2ase_HemE"/>
</dbReference>
<dbReference type="InterPro" id="IPR000257">
    <property type="entry name" value="Uroporphyrinogen_deCOase"/>
</dbReference>
<dbReference type="NCBIfam" id="TIGR01464">
    <property type="entry name" value="hemE"/>
    <property type="match status" value="1"/>
</dbReference>
<dbReference type="PANTHER" id="PTHR21091">
    <property type="entry name" value="METHYLTETRAHYDROFOLATE:HOMOCYSTEINE METHYLTRANSFERASE RELATED"/>
    <property type="match status" value="1"/>
</dbReference>
<dbReference type="PANTHER" id="PTHR21091:SF169">
    <property type="entry name" value="UROPORPHYRINOGEN DECARBOXYLASE"/>
    <property type="match status" value="1"/>
</dbReference>
<dbReference type="Pfam" id="PF01208">
    <property type="entry name" value="URO-D"/>
    <property type="match status" value="1"/>
</dbReference>
<dbReference type="SUPFAM" id="SSF51726">
    <property type="entry name" value="UROD/MetE-like"/>
    <property type="match status" value="1"/>
</dbReference>
<dbReference type="PROSITE" id="PS00906">
    <property type="entry name" value="UROD_1"/>
    <property type="match status" value="1"/>
</dbReference>
<dbReference type="PROSITE" id="PS00907">
    <property type="entry name" value="UROD_2"/>
    <property type="match status" value="1"/>
</dbReference>
<accession>Q7W3B3</accession>
<feature type="chain" id="PRO_0000187586" description="Uroporphyrinogen decarboxylase">
    <location>
        <begin position="1"/>
        <end position="358"/>
    </location>
</feature>
<feature type="binding site" evidence="1">
    <location>
        <begin position="29"/>
        <end position="33"/>
    </location>
    <ligand>
        <name>substrate</name>
    </ligand>
</feature>
<feature type="binding site" evidence="1">
    <location>
        <position position="48"/>
    </location>
    <ligand>
        <name>substrate</name>
    </ligand>
</feature>
<feature type="binding site" evidence="1">
    <location>
        <position position="79"/>
    </location>
    <ligand>
        <name>substrate</name>
    </ligand>
</feature>
<feature type="binding site" evidence="1">
    <location>
        <position position="155"/>
    </location>
    <ligand>
        <name>substrate</name>
    </ligand>
</feature>
<feature type="binding site" evidence="1">
    <location>
        <position position="210"/>
    </location>
    <ligand>
        <name>substrate</name>
    </ligand>
</feature>
<feature type="binding site" evidence="1">
    <location>
        <position position="330"/>
    </location>
    <ligand>
        <name>substrate</name>
    </ligand>
</feature>
<feature type="site" description="Transition state stabilizer" evidence="1">
    <location>
        <position position="79"/>
    </location>
</feature>
<keyword id="KW-0963">Cytoplasm</keyword>
<keyword id="KW-0210">Decarboxylase</keyword>
<keyword id="KW-0456">Lyase</keyword>
<keyword id="KW-0627">Porphyrin biosynthesis</keyword>
<proteinExistence type="inferred from homology"/>
<protein>
    <recommendedName>
        <fullName evidence="1">Uroporphyrinogen decarboxylase</fullName>
        <shortName evidence="1">UPD</shortName>
        <shortName evidence="1">URO-D</shortName>
        <ecNumber evidence="1">4.1.1.37</ecNumber>
    </recommendedName>
</protein>
<gene>
    <name evidence="1" type="primary">hemE</name>
    <name type="ordered locus">BPP4132</name>
</gene>
<evidence type="ECO:0000255" key="1">
    <source>
        <dbReference type="HAMAP-Rule" id="MF_00218"/>
    </source>
</evidence>
<organism>
    <name type="scientific">Bordetella parapertussis (strain 12822 / ATCC BAA-587 / NCTC 13253)</name>
    <dbReference type="NCBI Taxonomy" id="257311"/>
    <lineage>
        <taxon>Bacteria</taxon>
        <taxon>Pseudomonadati</taxon>
        <taxon>Pseudomonadota</taxon>
        <taxon>Betaproteobacteria</taxon>
        <taxon>Burkholderiales</taxon>
        <taxon>Alcaligenaceae</taxon>
        <taxon>Bordetella</taxon>
    </lineage>
</organism>
<name>DCUP_BORPA</name>
<reference key="1">
    <citation type="journal article" date="2003" name="Nat. Genet.">
        <title>Comparative analysis of the genome sequences of Bordetella pertussis, Bordetella parapertussis and Bordetella bronchiseptica.</title>
        <authorList>
            <person name="Parkhill J."/>
            <person name="Sebaihia M."/>
            <person name="Preston A."/>
            <person name="Murphy L.D."/>
            <person name="Thomson N.R."/>
            <person name="Harris D.E."/>
            <person name="Holden M.T.G."/>
            <person name="Churcher C.M."/>
            <person name="Bentley S.D."/>
            <person name="Mungall K.L."/>
            <person name="Cerdeno-Tarraga A.-M."/>
            <person name="Temple L."/>
            <person name="James K.D."/>
            <person name="Harris B."/>
            <person name="Quail M.A."/>
            <person name="Achtman M."/>
            <person name="Atkin R."/>
            <person name="Baker S."/>
            <person name="Basham D."/>
            <person name="Bason N."/>
            <person name="Cherevach I."/>
            <person name="Chillingworth T."/>
            <person name="Collins M."/>
            <person name="Cronin A."/>
            <person name="Davis P."/>
            <person name="Doggett J."/>
            <person name="Feltwell T."/>
            <person name="Goble A."/>
            <person name="Hamlin N."/>
            <person name="Hauser H."/>
            <person name="Holroyd S."/>
            <person name="Jagels K."/>
            <person name="Leather S."/>
            <person name="Moule S."/>
            <person name="Norberczak H."/>
            <person name="O'Neil S."/>
            <person name="Ormond D."/>
            <person name="Price C."/>
            <person name="Rabbinowitsch E."/>
            <person name="Rutter S."/>
            <person name="Sanders M."/>
            <person name="Saunders D."/>
            <person name="Seeger K."/>
            <person name="Sharp S."/>
            <person name="Simmonds M."/>
            <person name="Skelton J."/>
            <person name="Squares R."/>
            <person name="Squares S."/>
            <person name="Stevens K."/>
            <person name="Unwin L."/>
            <person name="Whitehead S."/>
            <person name="Barrell B.G."/>
            <person name="Maskell D.J."/>
        </authorList>
    </citation>
    <scope>NUCLEOTIDE SEQUENCE [LARGE SCALE GENOMIC DNA]</scope>
    <source>
        <strain>12822 / ATCC BAA-587 / NCTC 13253</strain>
    </source>
</reference>
<comment type="function">
    <text evidence="1">Catalyzes the decarboxylation of four acetate groups of uroporphyrinogen-III to yield coproporphyrinogen-III.</text>
</comment>
<comment type="catalytic activity">
    <reaction evidence="1">
        <text>uroporphyrinogen III + 4 H(+) = coproporphyrinogen III + 4 CO2</text>
        <dbReference type="Rhea" id="RHEA:19865"/>
        <dbReference type="ChEBI" id="CHEBI:15378"/>
        <dbReference type="ChEBI" id="CHEBI:16526"/>
        <dbReference type="ChEBI" id="CHEBI:57308"/>
        <dbReference type="ChEBI" id="CHEBI:57309"/>
        <dbReference type="EC" id="4.1.1.37"/>
    </reaction>
</comment>
<comment type="pathway">
    <text evidence="1">Porphyrin-containing compound metabolism; protoporphyrin-IX biosynthesis; coproporphyrinogen-III from 5-aminolevulinate: step 4/4.</text>
</comment>
<comment type="subunit">
    <text evidence="1">Homodimer.</text>
</comment>
<comment type="subcellular location">
    <subcellularLocation>
        <location evidence="1">Cytoplasm</location>
    </subcellularLocation>
</comment>
<comment type="similarity">
    <text evidence="1">Belongs to the uroporphyrinogen decarboxylase family.</text>
</comment>
<sequence>MSVAPLKNDVFLRALLREPVPYTPIWLMRQAGRYLPEYNATRARAGSFMGLAQNPDYACEVTLQPLARYPLDAAILFSDILTVPHAMGLGLDFAPGEGPRFAHPVRDESDVAKLAVPDMDSLRYVFDAVRTIRRELDGRVPLIGFAGSPWTIACYMVEGRGSDDYRLIKSMLYGRPDLLHRILEINAEATRHYLNAQIDAGAQAVMLFDSWGGVLADGLFQQFSLAYTRRVVEGLTREREGRRVPVIVFSKGGGQWLEEIAACGCDAVGLDWTVNLGTARRRVADAVALQGNLDPMTLFGGAQAVRAEARRTLDAFGPVGKGGHVFNLGHGISQYSPPEVVSELVDEVHTYSRALHAG</sequence>